<keyword id="KW-0560">Oxidoreductase</keyword>
<keyword id="KW-0663">Pyridoxal phosphate</keyword>
<keyword id="KW-1185">Reference proteome</keyword>
<organism>
    <name type="scientific">Shigella dysenteriae serotype 1 (strain Sd197)</name>
    <dbReference type="NCBI Taxonomy" id="300267"/>
    <lineage>
        <taxon>Bacteria</taxon>
        <taxon>Pseudomonadati</taxon>
        <taxon>Pseudomonadota</taxon>
        <taxon>Gammaproteobacteria</taxon>
        <taxon>Enterobacterales</taxon>
        <taxon>Enterobacteriaceae</taxon>
        <taxon>Shigella</taxon>
    </lineage>
</organism>
<protein>
    <recommendedName>
        <fullName evidence="1">Glycine dehydrogenase (decarboxylating)</fullName>
        <ecNumber evidence="1">1.4.4.2</ecNumber>
    </recommendedName>
    <alternativeName>
        <fullName evidence="1">Glycine cleavage system P-protein</fullName>
    </alternativeName>
    <alternativeName>
        <fullName evidence="1">Glycine decarboxylase</fullName>
    </alternativeName>
    <alternativeName>
        <fullName evidence="1">Glycine dehydrogenase (aminomethyl-transferring)</fullName>
    </alternativeName>
</protein>
<reference key="1">
    <citation type="journal article" date="2005" name="Nucleic Acids Res.">
        <title>Genome dynamics and diversity of Shigella species, the etiologic agents of bacillary dysentery.</title>
        <authorList>
            <person name="Yang F."/>
            <person name="Yang J."/>
            <person name="Zhang X."/>
            <person name="Chen L."/>
            <person name="Jiang Y."/>
            <person name="Yan Y."/>
            <person name="Tang X."/>
            <person name="Wang J."/>
            <person name="Xiong Z."/>
            <person name="Dong J."/>
            <person name="Xue Y."/>
            <person name="Zhu Y."/>
            <person name="Xu X."/>
            <person name="Sun L."/>
            <person name="Chen S."/>
            <person name="Nie H."/>
            <person name="Peng J."/>
            <person name="Xu J."/>
            <person name="Wang Y."/>
            <person name="Yuan Z."/>
            <person name="Wen Y."/>
            <person name="Yao Z."/>
            <person name="Shen Y."/>
            <person name="Qiang B."/>
            <person name="Hou Y."/>
            <person name="Yu J."/>
            <person name="Jin Q."/>
        </authorList>
    </citation>
    <scope>NUCLEOTIDE SEQUENCE [LARGE SCALE GENOMIC DNA]</scope>
    <source>
        <strain>Sd197</strain>
    </source>
</reference>
<gene>
    <name evidence="1" type="primary">gcvP</name>
    <name type="ordered locus">SDY_3178</name>
</gene>
<name>GCSP_SHIDS</name>
<accession>Q32BW5</accession>
<proteinExistence type="inferred from homology"/>
<sequence length="957" mass="104303">MTQTLSQLENSGAFIERHIGPDAAQQQEMLNAVGAQSLNALTGQIVPKDIQLATPPQVGAPATEYAALAELKAIASRNKRFTSYIGMGYTAVQLPPVILRNMLENPGWYTAYTPYQPEVSQGRLEALLNFQQVTLDLTGLDMASASLLDEATAAAEAMAMAKRVSKLKNANRFFVASDVHPQTLDVVRTRAETFGFEVIVDDAQKVLDHQDVFGVLLQQVGTTGEIHDYTALISELKSRKIVVSVAADIMALVLLTAPGKQGADIVFGSAQRFGVPMGYGGPHAAFFAAKDEYKRSMPGRIIGVSKDAAGNTALRMAMQTREQHIRREKANSNICTSQVLLANIASLYAVYHGPIGLKRIANRIHRLTDILAAGLQQKGLKLRHAHYFDTLCVEVADKAGVLARAEAAEINLRSDILNAVGITLDETTTRENVMQLFSVLLGDNHGLDIDTLDKDVAHDSRSIQPAMLRDDEILTHPVFNRYHSETEMMRYMHSLERKDLALNQAMIPLGSCTMKLNAAAEMIPITWPEFAELHPFCPPEQAEGYQQMIAQLADWLVKLTGYDAVCMQPNSGAQGEYAGLLAIRHYHESRNEGHRDICLIPASAHGTNPASAHMAGMQVVVVACDKNGNIDLADLRAKAEQAGDNLSCIMVTYPSTHGVYEETIREVCEVVHQFGGQVYLDGANMNAQVGITSPGFIGADVSHLNLHKTFCIPHGGGGPGMGPIGVKAHLAPFVPGHSVVQIEGMLTRQGAVSAAPFGSASILPISWMYIRMMGAEGLKKASQVAILNANYIASRLQDAFPVLYTGRDGRVAHECILDIRPLKEETGISELDIAKRLIDYGFHAPTMSFPVAGTLMVEPTESESKVELDRFIDAMLAIRAEIDQVKAGVWPLEDNPLVNAPHIQSELVAEWAHPYSREVAVFPAGVADKYWPTVKRLDDVYGDRNLFCSCVPISEYQ</sequence>
<evidence type="ECO:0000255" key="1">
    <source>
        <dbReference type="HAMAP-Rule" id="MF_00711"/>
    </source>
</evidence>
<dbReference type="EC" id="1.4.4.2" evidence="1"/>
<dbReference type="EMBL" id="CP000034">
    <property type="protein sequence ID" value="ABB63190.1"/>
    <property type="molecule type" value="Genomic_DNA"/>
</dbReference>
<dbReference type="RefSeq" id="WP_000195016.1">
    <property type="nucleotide sequence ID" value="NC_007606.1"/>
</dbReference>
<dbReference type="RefSeq" id="YP_404681.1">
    <property type="nucleotide sequence ID" value="NC_007606.1"/>
</dbReference>
<dbReference type="SMR" id="Q32BW5"/>
<dbReference type="STRING" id="300267.SDY_3178"/>
<dbReference type="EnsemblBacteria" id="ABB63190">
    <property type="protein sequence ID" value="ABB63190"/>
    <property type="gene ID" value="SDY_3178"/>
</dbReference>
<dbReference type="KEGG" id="sdy:SDY_3178"/>
<dbReference type="PATRIC" id="fig|300267.13.peg.3796"/>
<dbReference type="HOGENOM" id="CLU_004620_1_1_6"/>
<dbReference type="Proteomes" id="UP000002716">
    <property type="component" value="Chromosome"/>
</dbReference>
<dbReference type="GO" id="GO:0005829">
    <property type="term" value="C:cytosol"/>
    <property type="evidence" value="ECO:0007669"/>
    <property type="project" value="TreeGrafter"/>
</dbReference>
<dbReference type="GO" id="GO:0005960">
    <property type="term" value="C:glycine cleavage complex"/>
    <property type="evidence" value="ECO:0007669"/>
    <property type="project" value="TreeGrafter"/>
</dbReference>
<dbReference type="GO" id="GO:0016594">
    <property type="term" value="F:glycine binding"/>
    <property type="evidence" value="ECO:0007669"/>
    <property type="project" value="TreeGrafter"/>
</dbReference>
<dbReference type="GO" id="GO:0004375">
    <property type="term" value="F:glycine dehydrogenase (decarboxylating) activity"/>
    <property type="evidence" value="ECO:0007669"/>
    <property type="project" value="UniProtKB-EC"/>
</dbReference>
<dbReference type="GO" id="GO:0030170">
    <property type="term" value="F:pyridoxal phosphate binding"/>
    <property type="evidence" value="ECO:0007669"/>
    <property type="project" value="TreeGrafter"/>
</dbReference>
<dbReference type="GO" id="GO:0019464">
    <property type="term" value="P:glycine decarboxylation via glycine cleavage system"/>
    <property type="evidence" value="ECO:0007669"/>
    <property type="project" value="UniProtKB-UniRule"/>
</dbReference>
<dbReference type="CDD" id="cd00613">
    <property type="entry name" value="GDC-P"/>
    <property type="match status" value="2"/>
</dbReference>
<dbReference type="FunFam" id="3.40.640.10:FF:000005">
    <property type="entry name" value="Glycine dehydrogenase (decarboxylating), mitochondrial"/>
    <property type="match status" value="1"/>
</dbReference>
<dbReference type="FunFam" id="3.90.1150.10:FF:000007">
    <property type="entry name" value="Glycine dehydrogenase (decarboxylating), mitochondrial"/>
    <property type="match status" value="1"/>
</dbReference>
<dbReference type="FunFam" id="3.40.640.10:FF:000007">
    <property type="entry name" value="glycine dehydrogenase (Decarboxylating), mitochondrial"/>
    <property type="match status" value="1"/>
</dbReference>
<dbReference type="Gene3D" id="3.90.1150.10">
    <property type="entry name" value="Aspartate Aminotransferase, domain 1"/>
    <property type="match status" value="1"/>
</dbReference>
<dbReference type="Gene3D" id="3.40.640.10">
    <property type="entry name" value="Type I PLP-dependent aspartate aminotransferase-like (Major domain)"/>
    <property type="match status" value="2"/>
</dbReference>
<dbReference type="HAMAP" id="MF_00711">
    <property type="entry name" value="GcvP"/>
    <property type="match status" value="1"/>
</dbReference>
<dbReference type="InterPro" id="IPR003437">
    <property type="entry name" value="GcvP"/>
</dbReference>
<dbReference type="InterPro" id="IPR049316">
    <property type="entry name" value="GDC-P_C"/>
</dbReference>
<dbReference type="InterPro" id="IPR049315">
    <property type="entry name" value="GDC-P_N"/>
</dbReference>
<dbReference type="InterPro" id="IPR020581">
    <property type="entry name" value="GDC_P"/>
</dbReference>
<dbReference type="InterPro" id="IPR015424">
    <property type="entry name" value="PyrdxlP-dep_Trfase"/>
</dbReference>
<dbReference type="InterPro" id="IPR015421">
    <property type="entry name" value="PyrdxlP-dep_Trfase_major"/>
</dbReference>
<dbReference type="InterPro" id="IPR015422">
    <property type="entry name" value="PyrdxlP-dep_Trfase_small"/>
</dbReference>
<dbReference type="NCBIfam" id="TIGR00461">
    <property type="entry name" value="gcvP"/>
    <property type="match status" value="1"/>
</dbReference>
<dbReference type="NCBIfam" id="NF003346">
    <property type="entry name" value="PRK04366.1"/>
    <property type="match status" value="1"/>
</dbReference>
<dbReference type="PANTHER" id="PTHR11773:SF13">
    <property type="entry name" value="GLYCINE DEHYDROGENASE (DECARBOXYLATING)"/>
    <property type="match status" value="1"/>
</dbReference>
<dbReference type="PANTHER" id="PTHR11773">
    <property type="entry name" value="GLYCINE DEHYDROGENASE, DECARBOXYLATING"/>
    <property type="match status" value="1"/>
</dbReference>
<dbReference type="Pfam" id="PF21478">
    <property type="entry name" value="GcvP2_C"/>
    <property type="match status" value="1"/>
</dbReference>
<dbReference type="Pfam" id="PF02347">
    <property type="entry name" value="GDC-P"/>
    <property type="match status" value="2"/>
</dbReference>
<dbReference type="SUPFAM" id="SSF53383">
    <property type="entry name" value="PLP-dependent transferases"/>
    <property type="match status" value="2"/>
</dbReference>
<feature type="chain" id="PRO_1000045617" description="Glycine dehydrogenase (decarboxylating)">
    <location>
        <begin position="1"/>
        <end position="957"/>
    </location>
</feature>
<feature type="modified residue" description="N6-(pyridoxal phosphate)lysine" evidence="1">
    <location>
        <position position="708"/>
    </location>
</feature>
<comment type="function">
    <text evidence="1">The glycine cleavage system catalyzes the degradation of glycine. The P protein binds the alpha-amino group of glycine through its pyridoxal phosphate cofactor; CO(2) is released and the remaining methylamine moiety is then transferred to the lipoamide cofactor of the H protein.</text>
</comment>
<comment type="catalytic activity">
    <reaction evidence="1">
        <text>N(6)-[(R)-lipoyl]-L-lysyl-[glycine-cleavage complex H protein] + glycine + H(+) = N(6)-[(R)-S(8)-aminomethyldihydrolipoyl]-L-lysyl-[glycine-cleavage complex H protein] + CO2</text>
        <dbReference type="Rhea" id="RHEA:24304"/>
        <dbReference type="Rhea" id="RHEA-COMP:10494"/>
        <dbReference type="Rhea" id="RHEA-COMP:10495"/>
        <dbReference type="ChEBI" id="CHEBI:15378"/>
        <dbReference type="ChEBI" id="CHEBI:16526"/>
        <dbReference type="ChEBI" id="CHEBI:57305"/>
        <dbReference type="ChEBI" id="CHEBI:83099"/>
        <dbReference type="ChEBI" id="CHEBI:83143"/>
        <dbReference type="EC" id="1.4.4.2"/>
    </reaction>
</comment>
<comment type="cofactor">
    <cofactor evidence="1">
        <name>pyridoxal 5'-phosphate</name>
        <dbReference type="ChEBI" id="CHEBI:597326"/>
    </cofactor>
</comment>
<comment type="subunit">
    <text evidence="1">The glycine cleavage system is composed of four proteins: P, T, L and H.</text>
</comment>
<comment type="similarity">
    <text evidence="1">Belongs to the GcvP family.</text>
</comment>